<sequence length="265" mass="29166">MCMVIFAPLFAIFAFATCGGYSGGLRLSVDCVNKTESNLSIDIAFAYPFRLHQVTFEVPTCEGKERQKLALIGDSSSSAEFFVTVAVFAFLYSLAATVVYIFFQNKYRENNRGPLIDFIVTVVFSFLWLVGSSAWAKGLSDVKVATDPKEVLLLMSACKQPSNKCMAIHSPVMSSLNTSVVFGFLNFILWAGNIWFVFKETGWHSSGQRYLSDPMEKHSSSYNQGGYNQDSYGSSSGYSQQASLGPTSDEFGQQPTGPTSFTNQI</sequence>
<reference key="1">
    <citation type="submission" date="2002-10" db="EMBL/GenBank/DDBJ databases">
        <title>Cloning and characterization of a novel human synaptophysin-like protein.</title>
        <authorList>
            <person name="Mao Y."/>
            <person name="Xie Y."/>
            <person name="Cheng C."/>
        </authorList>
    </citation>
    <scope>NUCLEOTIDE SEQUENCE [MRNA] (ISOFORM 1)</scope>
</reference>
<reference key="2">
    <citation type="journal article" date="2004" name="Nat. Genet.">
        <title>Complete sequencing and characterization of 21,243 full-length human cDNAs.</title>
        <authorList>
            <person name="Ota T."/>
            <person name="Suzuki Y."/>
            <person name="Nishikawa T."/>
            <person name="Otsuki T."/>
            <person name="Sugiyama T."/>
            <person name="Irie R."/>
            <person name="Wakamatsu A."/>
            <person name="Hayashi K."/>
            <person name="Sato H."/>
            <person name="Nagai K."/>
            <person name="Kimura K."/>
            <person name="Makita H."/>
            <person name="Sekine M."/>
            <person name="Obayashi M."/>
            <person name="Nishi T."/>
            <person name="Shibahara T."/>
            <person name="Tanaka T."/>
            <person name="Ishii S."/>
            <person name="Yamamoto J."/>
            <person name="Saito K."/>
            <person name="Kawai Y."/>
            <person name="Isono Y."/>
            <person name="Nakamura Y."/>
            <person name="Nagahari K."/>
            <person name="Murakami K."/>
            <person name="Yasuda T."/>
            <person name="Iwayanagi T."/>
            <person name="Wagatsuma M."/>
            <person name="Shiratori A."/>
            <person name="Sudo H."/>
            <person name="Hosoiri T."/>
            <person name="Kaku Y."/>
            <person name="Kodaira H."/>
            <person name="Kondo H."/>
            <person name="Sugawara M."/>
            <person name="Takahashi M."/>
            <person name="Kanda K."/>
            <person name="Yokoi T."/>
            <person name="Furuya T."/>
            <person name="Kikkawa E."/>
            <person name="Omura Y."/>
            <person name="Abe K."/>
            <person name="Kamihara K."/>
            <person name="Katsuta N."/>
            <person name="Sato K."/>
            <person name="Tanikawa M."/>
            <person name="Yamazaki M."/>
            <person name="Ninomiya K."/>
            <person name="Ishibashi T."/>
            <person name="Yamashita H."/>
            <person name="Murakawa K."/>
            <person name="Fujimori K."/>
            <person name="Tanai H."/>
            <person name="Kimata M."/>
            <person name="Watanabe M."/>
            <person name="Hiraoka S."/>
            <person name="Chiba Y."/>
            <person name="Ishida S."/>
            <person name="Ono Y."/>
            <person name="Takiguchi S."/>
            <person name="Watanabe S."/>
            <person name="Yosida M."/>
            <person name="Hotuta T."/>
            <person name="Kusano J."/>
            <person name="Kanehori K."/>
            <person name="Takahashi-Fujii A."/>
            <person name="Hara H."/>
            <person name="Tanase T.-O."/>
            <person name="Nomura Y."/>
            <person name="Togiya S."/>
            <person name="Komai F."/>
            <person name="Hara R."/>
            <person name="Takeuchi K."/>
            <person name="Arita M."/>
            <person name="Imose N."/>
            <person name="Musashino K."/>
            <person name="Yuuki H."/>
            <person name="Oshima A."/>
            <person name="Sasaki N."/>
            <person name="Aotsuka S."/>
            <person name="Yoshikawa Y."/>
            <person name="Matsunawa H."/>
            <person name="Ichihara T."/>
            <person name="Shiohata N."/>
            <person name="Sano S."/>
            <person name="Moriya S."/>
            <person name="Momiyama H."/>
            <person name="Satoh N."/>
            <person name="Takami S."/>
            <person name="Terashima Y."/>
            <person name="Suzuki O."/>
            <person name="Nakagawa S."/>
            <person name="Senoh A."/>
            <person name="Mizoguchi H."/>
            <person name="Goto Y."/>
            <person name="Shimizu F."/>
            <person name="Wakebe H."/>
            <person name="Hishigaki H."/>
            <person name="Watanabe T."/>
            <person name="Sugiyama A."/>
            <person name="Takemoto M."/>
            <person name="Kawakami B."/>
            <person name="Yamazaki M."/>
            <person name="Watanabe K."/>
            <person name="Kumagai A."/>
            <person name="Itakura S."/>
            <person name="Fukuzumi Y."/>
            <person name="Fujimori Y."/>
            <person name="Komiyama M."/>
            <person name="Tashiro H."/>
            <person name="Tanigami A."/>
            <person name="Fujiwara T."/>
            <person name="Ono T."/>
            <person name="Yamada K."/>
            <person name="Fujii Y."/>
            <person name="Ozaki K."/>
            <person name="Hirao M."/>
            <person name="Ohmori Y."/>
            <person name="Kawabata A."/>
            <person name="Hikiji T."/>
            <person name="Kobatake N."/>
            <person name="Inagaki H."/>
            <person name="Ikema Y."/>
            <person name="Okamoto S."/>
            <person name="Okitani R."/>
            <person name="Kawakami T."/>
            <person name="Noguchi S."/>
            <person name="Itoh T."/>
            <person name="Shigeta K."/>
            <person name="Senba T."/>
            <person name="Matsumura K."/>
            <person name="Nakajima Y."/>
            <person name="Mizuno T."/>
            <person name="Morinaga M."/>
            <person name="Sasaki M."/>
            <person name="Togashi T."/>
            <person name="Oyama M."/>
            <person name="Hata H."/>
            <person name="Watanabe M."/>
            <person name="Komatsu T."/>
            <person name="Mizushima-Sugano J."/>
            <person name="Satoh T."/>
            <person name="Shirai Y."/>
            <person name="Takahashi Y."/>
            <person name="Nakagawa K."/>
            <person name="Okumura K."/>
            <person name="Nagase T."/>
            <person name="Nomura N."/>
            <person name="Kikuchi H."/>
            <person name="Masuho Y."/>
            <person name="Yamashita R."/>
            <person name="Nakai K."/>
            <person name="Yada T."/>
            <person name="Nakamura Y."/>
            <person name="Ohara O."/>
            <person name="Isogai T."/>
            <person name="Sugano S."/>
        </authorList>
    </citation>
    <scope>NUCLEOTIDE SEQUENCE [LARGE SCALE MRNA] (ISOFORM 1)</scope>
    <source>
        <tissue>Hippocampus</tissue>
    </source>
</reference>
<reference key="3">
    <citation type="journal article" date="2007" name="BMC Genomics">
        <title>The full-ORF clone resource of the German cDNA consortium.</title>
        <authorList>
            <person name="Bechtel S."/>
            <person name="Rosenfelder H."/>
            <person name="Duda A."/>
            <person name="Schmidt C.P."/>
            <person name="Ernst U."/>
            <person name="Wellenreuther R."/>
            <person name="Mehrle A."/>
            <person name="Schuster C."/>
            <person name="Bahr A."/>
            <person name="Bloecker H."/>
            <person name="Heubner D."/>
            <person name="Hoerlein A."/>
            <person name="Michel G."/>
            <person name="Wedler H."/>
            <person name="Koehrer K."/>
            <person name="Ottenwaelder B."/>
            <person name="Poustka A."/>
            <person name="Wiemann S."/>
            <person name="Schupp I."/>
        </authorList>
    </citation>
    <scope>NUCLEOTIDE SEQUENCE [LARGE SCALE MRNA] (ISOFORMS 1 AND 2)</scope>
    <source>
        <tissue>Brain</tissue>
        <tissue>Retina</tissue>
    </source>
</reference>
<reference key="4">
    <citation type="journal article" date="2006" name="Nature">
        <title>The DNA sequence, annotation and analysis of human chromosome 3.</title>
        <authorList>
            <person name="Muzny D.M."/>
            <person name="Scherer S.E."/>
            <person name="Kaul R."/>
            <person name="Wang J."/>
            <person name="Yu J."/>
            <person name="Sudbrak R."/>
            <person name="Buhay C.J."/>
            <person name="Chen R."/>
            <person name="Cree A."/>
            <person name="Ding Y."/>
            <person name="Dugan-Rocha S."/>
            <person name="Gill R."/>
            <person name="Gunaratne P."/>
            <person name="Harris R.A."/>
            <person name="Hawes A.C."/>
            <person name="Hernandez J."/>
            <person name="Hodgson A.V."/>
            <person name="Hume J."/>
            <person name="Jackson A."/>
            <person name="Khan Z.M."/>
            <person name="Kovar-Smith C."/>
            <person name="Lewis L.R."/>
            <person name="Lozado R.J."/>
            <person name="Metzker M.L."/>
            <person name="Milosavljevic A."/>
            <person name="Miner G.R."/>
            <person name="Morgan M.B."/>
            <person name="Nazareth L.V."/>
            <person name="Scott G."/>
            <person name="Sodergren E."/>
            <person name="Song X.-Z."/>
            <person name="Steffen D."/>
            <person name="Wei S."/>
            <person name="Wheeler D.A."/>
            <person name="Wright M.W."/>
            <person name="Worley K.C."/>
            <person name="Yuan Y."/>
            <person name="Zhang Z."/>
            <person name="Adams C.Q."/>
            <person name="Ansari-Lari M.A."/>
            <person name="Ayele M."/>
            <person name="Brown M.J."/>
            <person name="Chen G."/>
            <person name="Chen Z."/>
            <person name="Clendenning J."/>
            <person name="Clerc-Blankenburg K.P."/>
            <person name="Chen R."/>
            <person name="Chen Z."/>
            <person name="Davis C."/>
            <person name="Delgado O."/>
            <person name="Dinh H.H."/>
            <person name="Dong W."/>
            <person name="Draper H."/>
            <person name="Ernst S."/>
            <person name="Fu G."/>
            <person name="Gonzalez-Garay M.L."/>
            <person name="Garcia D.K."/>
            <person name="Gillett W."/>
            <person name="Gu J."/>
            <person name="Hao B."/>
            <person name="Haugen E."/>
            <person name="Havlak P."/>
            <person name="He X."/>
            <person name="Hennig S."/>
            <person name="Hu S."/>
            <person name="Huang W."/>
            <person name="Jackson L.R."/>
            <person name="Jacob L.S."/>
            <person name="Kelly S.H."/>
            <person name="Kube M."/>
            <person name="Levy R."/>
            <person name="Li Z."/>
            <person name="Liu B."/>
            <person name="Liu J."/>
            <person name="Liu W."/>
            <person name="Lu J."/>
            <person name="Maheshwari M."/>
            <person name="Nguyen B.-V."/>
            <person name="Okwuonu G.O."/>
            <person name="Palmeiri A."/>
            <person name="Pasternak S."/>
            <person name="Perez L.M."/>
            <person name="Phelps K.A."/>
            <person name="Plopper F.J."/>
            <person name="Qiang B."/>
            <person name="Raymond C."/>
            <person name="Rodriguez R."/>
            <person name="Saenphimmachak C."/>
            <person name="Santibanez J."/>
            <person name="Shen H."/>
            <person name="Shen Y."/>
            <person name="Subramanian S."/>
            <person name="Tabor P.E."/>
            <person name="Verduzco D."/>
            <person name="Waldron L."/>
            <person name="Wang J."/>
            <person name="Wang J."/>
            <person name="Wang Q."/>
            <person name="Williams G.A."/>
            <person name="Wong G.K.-S."/>
            <person name="Yao Z."/>
            <person name="Zhang J."/>
            <person name="Zhang X."/>
            <person name="Zhao G."/>
            <person name="Zhou J."/>
            <person name="Zhou Y."/>
            <person name="Nelson D."/>
            <person name="Lehrach H."/>
            <person name="Reinhardt R."/>
            <person name="Naylor S.L."/>
            <person name="Yang H."/>
            <person name="Olson M."/>
            <person name="Weinstock G."/>
            <person name="Gibbs R.A."/>
        </authorList>
    </citation>
    <scope>NUCLEOTIDE SEQUENCE [LARGE SCALE GENOMIC DNA]</scope>
</reference>
<reference key="5">
    <citation type="submission" date="2005-07" db="EMBL/GenBank/DDBJ databases">
        <authorList>
            <person name="Mural R.J."/>
            <person name="Istrail S."/>
            <person name="Sutton G.G."/>
            <person name="Florea L."/>
            <person name="Halpern A.L."/>
            <person name="Mobarry C.M."/>
            <person name="Lippert R."/>
            <person name="Walenz B."/>
            <person name="Shatkay H."/>
            <person name="Dew I."/>
            <person name="Miller J.R."/>
            <person name="Flanigan M.J."/>
            <person name="Edwards N.J."/>
            <person name="Bolanos R."/>
            <person name="Fasulo D."/>
            <person name="Halldorsson B.V."/>
            <person name="Hannenhalli S."/>
            <person name="Turner R."/>
            <person name="Yooseph S."/>
            <person name="Lu F."/>
            <person name="Nusskern D.R."/>
            <person name="Shue B.C."/>
            <person name="Zheng X.H."/>
            <person name="Zhong F."/>
            <person name="Delcher A.L."/>
            <person name="Huson D.H."/>
            <person name="Kravitz S.A."/>
            <person name="Mouchard L."/>
            <person name="Reinert K."/>
            <person name="Remington K.A."/>
            <person name="Clark A.G."/>
            <person name="Waterman M.S."/>
            <person name="Eichler E.E."/>
            <person name="Adams M.D."/>
            <person name="Hunkapiller M.W."/>
            <person name="Myers E.W."/>
            <person name="Venter J.C."/>
        </authorList>
    </citation>
    <scope>NUCLEOTIDE SEQUENCE [LARGE SCALE GENOMIC DNA]</scope>
</reference>
<reference key="6">
    <citation type="journal article" date="2004" name="Genome Res.">
        <title>The status, quality, and expansion of the NIH full-length cDNA project: the Mammalian Gene Collection (MGC).</title>
        <authorList>
            <consortium name="The MGC Project Team"/>
        </authorList>
    </citation>
    <scope>NUCLEOTIDE SEQUENCE [LARGE SCALE MRNA] (ISOFORM 1)</scope>
    <source>
        <tissue>Brain</tissue>
    </source>
</reference>
<dbReference type="EMBL" id="AF411860">
    <property type="protein sequence ID" value="AAN03681.2"/>
    <property type="molecule type" value="mRNA"/>
</dbReference>
<dbReference type="EMBL" id="AK312465">
    <property type="protein sequence ID" value="BAG35372.1"/>
    <property type="molecule type" value="mRNA"/>
</dbReference>
<dbReference type="EMBL" id="AL834457">
    <property type="protein sequence ID" value="CAD39117.1"/>
    <property type="molecule type" value="mRNA"/>
</dbReference>
<dbReference type="EMBL" id="CR936762">
    <property type="status" value="NOT_ANNOTATED_CDS"/>
    <property type="molecule type" value="mRNA"/>
</dbReference>
<dbReference type="EMBL" id="AC099056">
    <property type="status" value="NOT_ANNOTATED_CDS"/>
    <property type="molecule type" value="Genomic_DNA"/>
</dbReference>
<dbReference type="EMBL" id="AC099545">
    <property type="status" value="NOT_ANNOTATED_CDS"/>
    <property type="molecule type" value="Genomic_DNA"/>
</dbReference>
<dbReference type="EMBL" id="AC104436">
    <property type="status" value="NOT_ANNOTATED_CDS"/>
    <property type="molecule type" value="Genomic_DNA"/>
</dbReference>
<dbReference type="EMBL" id="CH471055">
    <property type="protein sequence ID" value="EAW65413.1"/>
    <property type="molecule type" value="Genomic_DNA"/>
</dbReference>
<dbReference type="EMBL" id="CH471055">
    <property type="protein sequence ID" value="EAW65414.1"/>
    <property type="molecule type" value="Genomic_DNA"/>
</dbReference>
<dbReference type="EMBL" id="BC022518">
    <property type="protein sequence ID" value="AAH22518.1"/>
    <property type="molecule type" value="mRNA"/>
</dbReference>
<dbReference type="CCDS" id="CCDS46859.1">
    <molecule id="Q8TBG9-2"/>
</dbReference>
<dbReference type="CCDS" id="CCDS46860.1">
    <molecule id="Q8TBG9-1"/>
</dbReference>
<dbReference type="RefSeq" id="NP_001123475.1">
    <molecule id="Q8TBG9-2"/>
    <property type="nucleotide sequence ID" value="NM_001130003.2"/>
</dbReference>
<dbReference type="RefSeq" id="NP_653243.1">
    <molecule id="Q8TBG9-1"/>
    <property type="nucleotide sequence ID" value="NM_144642.5"/>
</dbReference>
<dbReference type="SMR" id="Q8TBG9"/>
<dbReference type="BioGRID" id="126311">
    <property type="interactions" value="14"/>
</dbReference>
<dbReference type="FunCoup" id="Q8TBG9">
    <property type="interactions" value="49"/>
</dbReference>
<dbReference type="IntAct" id="Q8TBG9">
    <property type="interactions" value="14"/>
</dbReference>
<dbReference type="STRING" id="9606.ENSP00000418994"/>
<dbReference type="GlyCosmos" id="Q8TBG9">
    <property type="glycosylation" value="2 sites, No reported glycans"/>
</dbReference>
<dbReference type="GlyGen" id="Q8TBG9">
    <property type="glycosylation" value="2 sites, 5 N-linked glycans (1 site)"/>
</dbReference>
<dbReference type="iPTMnet" id="Q8TBG9"/>
<dbReference type="PhosphoSitePlus" id="Q8TBG9"/>
<dbReference type="SwissPalm" id="Q8TBG9"/>
<dbReference type="BioMuta" id="SYNPR"/>
<dbReference type="DMDM" id="48474879"/>
<dbReference type="MassIVE" id="Q8TBG9"/>
<dbReference type="PaxDb" id="9606-ENSP00000418994"/>
<dbReference type="PeptideAtlas" id="Q8TBG9"/>
<dbReference type="ProteomicsDB" id="34063"/>
<dbReference type="ProteomicsDB" id="74016">
    <molecule id="Q8TBG9-1"/>
</dbReference>
<dbReference type="Antibodypedia" id="31743">
    <property type="antibodies" value="153 antibodies from 23 providers"/>
</dbReference>
<dbReference type="DNASU" id="132204"/>
<dbReference type="Ensembl" id="ENST00000295894.9">
    <molecule id="Q8TBG9-1"/>
    <property type="protein sequence ID" value="ENSP00000295894.5"/>
    <property type="gene ID" value="ENSG00000163630.11"/>
</dbReference>
<dbReference type="Ensembl" id="ENST00000478300.6">
    <molecule id="Q8TBG9-2"/>
    <property type="protein sequence ID" value="ENSP00000418994.1"/>
    <property type="gene ID" value="ENSG00000163630.11"/>
</dbReference>
<dbReference type="GeneID" id="132204"/>
<dbReference type="KEGG" id="hsa:132204"/>
<dbReference type="MANE-Select" id="ENST00000478300.6">
    <molecule id="Q8TBG9-2"/>
    <property type="protein sequence ID" value="ENSP00000418994.1"/>
    <property type="RefSeq nucleotide sequence ID" value="NM_001130003.2"/>
    <property type="RefSeq protein sequence ID" value="NP_001123475.1"/>
</dbReference>
<dbReference type="UCSC" id="uc003dlp.4">
    <molecule id="Q8TBG9-1"/>
    <property type="organism name" value="human"/>
</dbReference>
<dbReference type="AGR" id="HGNC:16507"/>
<dbReference type="CTD" id="132204"/>
<dbReference type="DisGeNET" id="132204"/>
<dbReference type="GeneCards" id="SYNPR"/>
<dbReference type="HGNC" id="HGNC:16507">
    <property type="gene designation" value="SYNPR"/>
</dbReference>
<dbReference type="HPA" id="ENSG00000163630">
    <property type="expression patterns" value="Tissue enriched (brain)"/>
</dbReference>
<dbReference type="neXtProt" id="NX_Q8TBG9"/>
<dbReference type="OpenTargets" id="ENSG00000163630"/>
<dbReference type="PharmGKB" id="PA38154"/>
<dbReference type="VEuPathDB" id="HostDB:ENSG00000163630"/>
<dbReference type="eggNOG" id="ENOG502QT4W">
    <property type="taxonomic scope" value="Eukaryota"/>
</dbReference>
<dbReference type="GeneTree" id="ENSGT01030000234637"/>
<dbReference type="HOGENOM" id="CLU_064642_0_1_1"/>
<dbReference type="InParanoid" id="Q8TBG9"/>
<dbReference type="OMA" id="ANKCMAV"/>
<dbReference type="OrthoDB" id="10006326at2759"/>
<dbReference type="PAN-GO" id="Q8TBG9">
    <property type="GO annotations" value="1 GO annotation based on evolutionary models"/>
</dbReference>
<dbReference type="PhylomeDB" id="Q8TBG9"/>
<dbReference type="TreeFam" id="TF315804"/>
<dbReference type="PathwayCommons" id="Q8TBG9"/>
<dbReference type="SignaLink" id="Q8TBG9"/>
<dbReference type="BioGRID-ORCS" id="132204">
    <property type="hits" value="12 hits in 1144 CRISPR screens"/>
</dbReference>
<dbReference type="ChiTaRS" id="SYNPR">
    <property type="organism name" value="human"/>
</dbReference>
<dbReference type="GeneWiki" id="SYNPR"/>
<dbReference type="GenomeRNAi" id="132204"/>
<dbReference type="Pharos" id="Q8TBG9">
    <property type="development level" value="Tbio"/>
</dbReference>
<dbReference type="PRO" id="PR:Q8TBG9"/>
<dbReference type="Proteomes" id="UP000005640">
    <property type="component" value="Chromosome 3"/>
</dbReference>
<dbReference type="RNAct" id="Q8TBG9">
    <property type="molecule type" value="protein"/>
</dbReference>
<dbReference type="Bgee" id="ENSG00000163630">
    <property type="expression patterns" value="Expressed in lateral nuclear group of thalamus and 117 other cell types or tissues"/>
</dbReference>
<dbReference type="ExpressionAtlas" id="Q8TBG9">
    <property type="expression patterns" value="baseline and differential"/>
</dbReference>
<dbReference type="GO" id="GO:0043005">
    <property type="term" value="C:neuron projection"/>
    <property type="evidence" value="ECO:0007669"/>
    <property type="project" value="UniProtKB-KW"/>
</dbReference>
<dbReference type="GO" id="GO:0030672">
    <property type="term" value="C:synaptic vesicle membrane"/>
    <property type="evidence" value="ECO:0000318"/>
    <property type="project" value="GO_Central"/>
</dbReference>
<dbReference type="InterPro" id="IPR008253">
    <property type="entry name" value="Marvel"/>
</dbReference>
<dbReference type="InterPro" id="IPR001285">
    <property type="entry name" value="Synaptophysin/porin"/>
</dbReference>
<dbReference type="PANTHER" id="PTHR10306">
    <property type="entry name" value="SYNAPTOPHYSIN"/>
    <property type="match status" value="1"/>
</dbReference>
<dbReference type="PANTHER" id="PTHR10306:SF16">
    <property type="entry name" value="SYNAPTOPORIN"/>
    <property type="match status" value="1"/>
</dbReference>
<dbReference type="Pfam" id="PF01284">
    <property type="entry name" value="MARVEL"/>
    <property type="match status" value="1"/>
</dbReference>
<dbReference type="PRINTS" id="PR00220">
    <property type="entry name" value="SYNAPTOPHYSN"/>
</dbReference>
<dbReference type="PROSITE" id="PS51225">
    <property type="entry name" value="MARVEL"/>
    <property type="match status" value="1"/>
</dbReference>
<dbReference type="PROSITE" id="PS00604">
    <property type="entry name" value="SYNAPTOP"/>
    <property type="match status" value="1"/>
</dbReference>
<organism>
    <name type="scientific">Homo sapiens</name>
    <name type="common">Human</name>
    <dbReference type="NCBI Taxonomy" id="9606"/>
    <lineage>
        <taxon>Eukaryota</taxon>
        <taxon>Metazoa</taxon>
        <taxon>Chordata</taxon>
        <taxon>Craniata</taxon>
        <taxon>Vertebrata</taxon>
        <taxon>Euteleostomi</taxon>
        <taxon>Mammalia</taxon>
        <taxon>Eutheria</taxon>
        <taxon>Euarchontoglires</taxon>
        <taxon>Primates</taxon>
        <taxon>Haplorrhini</taxon>
        <taxon>Catarrhini</taxon>
        <taxon>Hominidae</taxon>
        <taxon>Homo</taxon>
    </lineage>
</organism>
<comment type="function">
    <text evidence="1">Intrinsic membrane protein of small synaptic vesicles. Probable vesicular channel protein (By similarity).</text>
</comment>
<comment type="interaction">
    <interactant intactId="EBI-10273251">
        <id>Q8TBG9</id>
    </interactant>
    <interactant intactId="EBI-12003442">
        <id>Q8WVX3-2</id>
        <label>C4orf3</label>
    </interactant>
    <organismsDiffer>false</organismsDiffer>
    <experiments>3</experiments>
</comment>
<comment type="interaction">
    <interactant intactId="EBI-10273251">
        <id>Q8TBG9</id>
    </interactant>
    <interactant intactId="EBI-8645574">
        <id>Q9UPQ8</id>
        <label>DOLK</label>
    </interactant>
    <organismsDiffer>false</organismsDiffer>
    <experiments>3</experiments>
</comment>
<comment type="interaction">
    <interactant intactId="EBI-10273251">
        <id>Q8TBG9</id>
    </interactant>
    <interactant intactId="EBI-743099">
        <id>Q969F0</id>
        <label>FATE1</label>
    </interactant>
    <organismsDiffer>false</organismsDiffer>
    <experiments>3</experiments>
</comment>
<comment type="interaction">
    <interactant intactId="EBI-10273251">
        <id>Q8TBG9</id>
    </interactant>
    <interactant intactId="EBI-3925203">
        <id>Q8N3T1</id>
        <label>GALNT15</label>
    </interactant>
    <organismsDiffer>false</organismsDiffer>
    <experiments>3</experiments>
</comment>
<comment type="interaction">
    <interactant intactId="EBI-10273251">
        <id>Q8TBG9</id>
    </interactant>
    <interactant intactId="EBI-2927498">
        <id>O60883</id>
        <label>GPR37L1</label>
    </interactant>
    <organismsDiffer>false</organismsDiffer>
    <experiments>3</experiments>
</comment>
<comment type="interaction">
    <interactant intactId="EBI-10273251">
        <id>Q8TBG9</id>
    </interactant>
    <interactant intactId="EBI-12007212">
        <id>Q86UP2-3</id>
        <label>KTN1</label>
    </interactant>
    <organismsDiffer>false</organismsDiffer>
    <experiments>3</experiments>
</comment>
<comment type="interaction">
    <interactant intactId="EBI-10273251">
        <id>Q8TBG9</id>
    </interactant>
    <interactant intactId="EBI-1047206">
        <id>Q9C0E8</id>
        <label>LNPK</label>
    </interactant>
    <organismsDiffer>false</organismsDiffer>
    <experiments>2</experiments>
</comment>
<comment type="interaction">
    <interactant intactId="EBI-10273251">
        <id>Q8TBG9</id>
    </interactant>
    <interactant intactId="EBI-11721828">
        <id>Q8IY26</id>
        <label>PLPP6</label>
    </interactant>
    <organismsDiffer>false</organismsDiffer>
    <experiments>3</experiments>
</comment>
<comment type="interaction">
    <interactant intactId="EBI-10273251">
        <id>Q8TBG9</id>
    </interactant>
    <interactant intactId="EBI-745376">
        <id>P43005</id>
        <label>SLC1A1</label>
    </interactant>
    <organismsDiffer>false</organismsDiffer>
    <experiments>3</experiments>
</comment>
<comment type="interaction">
    <interactant intactId="EBI-10273251">
        <id>Q8TBG9</id>
    </interactant>
    <interactant intactId="EBI-8640191">
        <id>Q9NRQ5</id>
        <label>SMCO4</label>
    </interactant>
    <organismsDiffer>false</organismsDiffer>
    <experiments>3</experiments>
</comment>
<comment type="interaction">
    <interactant intactId="EBI-10273251">
        <id>Q8TBG9</id>
    </interactant>
    <interactant intactId="EBI-11988865">
        <id>A5PKU2</id>
        <label>TUSC5</label>
    </interactant>
    <organismsDiffer>false</organismsDiffer>
    <experiments>3</experiments>
</comment>
<comment type="subcellular location">
    <subcellularLocation>
        <location evidence="1">Cytoplasmic vesicle</location>
        <location evidence="1">Secretory vesicle</location>
        <location evidence="1">Synaptic vesicle membrane</location>
        <topology evidence="1">Multi-pass membrane protein</topology>
    </subcellularLocation>
    <subcellularLocation>
        <location evidence="1">Synapse</location>
        <location evidence="1">Synaptosome</location>
    </subcellularLocation>
</comment>
<comment type="alternative products">
    <event type="alternative splicing"/>
    <isoform>
        <id>Q8TBG9-1</id>
        <name>1</name>
        <sequence type="displayed"/>
    </isoform>
    <isoform>
        <id>Q8TBG9-2</id>
        <name>2</name>
        <sequence type="described" ref="VSP_046199"/>
    </isoform>
</comment>
<comment type="similarity">
    <text evidence="7">Belongs to the synaptophysin/synaptobrevin family.</text>
</comment>
<protein>
    <recommendedName>
        <fullName>Synaptoporin</fullName>
    </recommendedName>
</protein>
<evidence type="ECO:0000250" key="1"/>
<evidence type="ECO:0000250" key="2">
    <source>
        <dbReference type="UniProtKB" id="P22831"/>
    </source>
</evidence>
<evidence type="ECO:0000255" key="3"/>
<evidence type="ECO:0000255" key="4">
    <source>
        <dbReference type="PROSITE-ProRule" id="PRU00581"/>
    </source>
</evidence>
<evidence type="ECO:0000256" key="5">
    <source>
        <dbReference type="SAM" id="MobiDB-lite"/>
    </source>
</evidence>
<evidence type="ECO:0000303" key="6">
    <source>
    </source>
</evidence>
<evidence type="ECO:0000305" key="7"/>
<accession>Q8TBG9</accession>
<accession>B2R675</accession>
<accession>G5E9W4</accession>
<gene>
    <name type="primary">SYNPR</name>
</gene>
<proteinExistence type="evidence at protein level"/>
<name>SYNPR_HUMAN</name>
<keyword id="KW-0025">Alternative splicing</keyword>
<keyword id="KW-0968">Cytoplasmic vesicle</keyword>
<keyword id="KW-0325">Glycoprotein</keyword>
<keyword id="KW-0472">Membrane</keyword>
<keyword id="KW-0597">Phosphoprotein</keyword>
<keyword id="KW-1267">Proteomics identification</keyword>
<keyword id="KW-1185">Reference proteome</keyword>
<keyword id="KW-0677">Repeat</keyword>
<keyword id="KW-0770">Synapse</keyword>
<keyword id="KW-0771">Synaptosome</keyword>
<keyword id="KW-0812">Transmembrane</keyword>
<keyword id="KW-1133">Transmembrane helix</keyword>
<feature type="chain" id="PRO_0000179157" description="Synaptoporin">
    <location>
        <begin position="1"/>
        <end position="265"/>
    </location>
</feature>
<feature type="topological domain" description="Cytoplasmic" evidence="3">
    <location>
        <begin position="1"/>
        <end position="4"/>
    </location>
</feature>
<feature type="transmembrane region" description="Helical" evidence="3">
    <location>
        <begin position="5"/>
        <end position="25"/>
    </location>
</feature>
<feature type="topological domain" description="Vesicular" evidence="3">
    <location>
        <begin position="26"/>
        <end position="81"/>
    </location>
</feature>
<feature type="transmembrane region" description="Helical" evidence="3">
    <location>
        <begin position="82"/>
        <end position="102"/>
    </location>
</feature>
<feature type="topological domain" description="Cytoplasmic" evidence="3">
    <location>
        <begin position="103"/>
        <end position="114"/>
    </location>
</feature>
<feature type="transmembrane region" description="Helical" evidence="3">
    <location>
        <begin position="115"/>
        <end position="135"/>
    </location>
</feature>
<feature type="topological domain" description="Vesicular" evidence="3">
    <location>
        <begin position="136"/>
        <end position="177"/>
    </location>
</feature>
<feature type="transmembrane region" description="Helical" evidence="3">
    <location>
        <begin position="178"/>
        <end position="198"/>
    </location>
</feature>
<feature type="topological domain" description="Cytoplasmic" evidence="3">
    <location>
        <begin position="199"/>
        <end position="265"/>
    </location>
</feature>
<feature type="domain" description="MARVEL" evidence="4">
    <location>
        <begin position="1"/>
        <end position="202"/>
    </location>
</feature>
<feature type="repeat" description="1">
    <location>
        <begin position="210"/>
        <end position="214"/>
    </location>
</feature>
<feature type="repeat" description="2">
    <location>
        <begin position="222"/>
        <end position="226"/>
    </location>
</feature>
<feature type="repeat" description="3">
    <location>
        <begin position="227"/>
        <end position="231"/>
    </location>
</feature>
<feature type="repeat" description="4">
    <location>
        <begin position="232"/>
        <end position="236"/>
    </location>
</feature>
<feature type="repeat" description="5">
    <location>
        <begin position="238"/>
        <end position="242"/>
    </location>
</feature>
<feature type="region of interest" description="5 X approximate repeats">
    <location>
        <begin position="210"/>
        <end position="242"/>
    </location>
</feature>
<feature type="region of interest" description="Disordered" evidence="5">
    <location>
        <begin position="221"/>
        <end position="265"/>
    </location>
</feature>
<feature type="compositionally biased region" description="Low complexity" evidence="5">
    <location>
        <begin position="224"/>
        <end position="243"/>
    </location>
</feature>
<feature type="compositionally biased region" description="Polar residues" evidence="5">
    <location>
        <begin position="244"/>
        <end position="265"/>
    </location>
</feature>
<feature type="modified residue" description="Phosphoserine" evidence="2">
    <location>
        <position position="212"/>
    </location>
</feature>
<feature type="glycosylation site" description="N-linked (GlcNAc...) asparagine" evidence="3">
    <location>
        <position position="33"/>
    </location>
</feature>
<feature type="glycosylation site" description="N-linked (GlcNAc...) asparagine" evidence="3">
    <location>
        <position position="38"/>
    </location>
</feature>
<feature type="splice variant" id="VSP_046199" description="In isoform 2." evidence="6">
    <original>MCMVIFAP</original>
    <variation>MDPVSQLASAGTFRVLKEPLAFLRALEL</variation>
    <location>
        <begin position="1"/>
        <end position="8"/>
    </location>
</feature>